<organism>
    <name type="scientific">Aeromonas salmonicida (strain A449)</name>
    <dbReference type="NCBI Taxonomy" id="382245"/>
    <lineage>
        <taxon>Bacteria</taxon>
        <taxon>Pseudomonadati</taxon>
        <taxon>Pseudomonadota</taxon>
        <taxon>Gammaproteobacteria</taxon>
        <taxon>Aeromonadales</taxon>
        <taxon>Aeromonadaceae</taxon>
        <taxon>Aeromonas</taxon>
    </lineage>
</organism>
<comment type="function">
    <text evidence="1">Required for the formation of a threonylcarbamoyl group on adenosine at position 37 (t(6)A37) in tRNAs that read codons beginning with adenine. Catalyzes the conversion of L-threonine, HCO(3)(-)/CO(2) and ATP to give threonylcarbamoyl-AMP (TC-AMP) as the acyladenylate intermediate, with the release of diphosphate.</text>
</comment>
<comment type="catalytic activity">
    <reaction evidence="1">
        <text>L-threonine + hydrogencarbonate + ATP = L-threonylcarbamoyladenylate + diphosphate + H2O</text>
        <dbReference type="Rhea" id="RHEA:36407"/>
        <dbReference type="ChEBI" id="CHEBI:15377"/>
        <dbReference type="ChEBI" id="CHEBI:17544"/>
        <dbReference type="ChEBI" id="CHEBI:30616"/>
        <dbReference type="ChEBI" id="CHEBI:33019"/>
        <dbReference type="ChEBI" id="CHEBI:57926"/>
        <dbReference type="ChEBI" id="CHEBI:73682"/>
        <dbReference type="EC" id="2.7.7.87"/>
    </reaction>
</comment>
<comment type="subcellular location">
    <subcellularLocation>
        <location evidence="1">Cytoplasm</location>
    </subcellularLocation>
</comment>
<comment type="similarity">
    <text evidence="1">Belongs to the SUA5 family. TsaC subfamily.</text>
</comment>
<dbReference type="EC" id="2.7.7.87" evidence="1"/>
<dbReference type="EMBL" id="CP000644">
    <property type="protein sequence ID" value="ABO92073.1"/>
    <property type="molecule type" value="Genomic_DNA"/>
</dbReference>
<dbReference type="RefSeq" id="WP_005319904.1">
    <property type="nucleotide sequence ID" value="NC_009348.1"/>
</dbReference>
<dbReference type="SMR" id="A4ST51"/>
<dbReference type="STRING" id="29491.GCA_000820065_03418"/>
<dbReference type="KEGG" id="asa:ASA_4134"/>
<dbReference type="eggNOG" id="COG0009">
    <property type="taxonomic scope" value="Bacteria"/>
</dbReference>
<dbReference type="HOGENOM" id="CLU_031397_6_0_6"/>
<dbReference type="Proteomes" id="UP000000225">
    <property type="component" value="Chromosome"/>
</dbReference>
<dbReference type="GO" id="GO:0005737">
    <property type="term" value="C:cytoplasm"/>
    <property type="evidence" value="ECO:0007669"/>
    <property type="project" value="UniProtKB-SubCell"/>
</dbReference>
<dbReference type="GO" id="GO:0005524">
    <property type="term" value="F:ATP binding"/>
    <property type="evidence" value="ECO:0007669"/>
    <property type="project" value="UniProtKB-UniRule"/>
</dbReference>
<dbReference type="GO" id="GO:0003725">
    <property type="term" value="F:double-stranded RNA binding"/>
    <property type="evidence" value="ECO:0007669"/>
    <property type="project" value="InterPro"/>
</dbReference>
<dbReference type="GO" id="GO:0061710">
    <property type="term" value="F:L-threonylcarbamoyladenylate synthase"/>
    <property type="evidence" value="ECO:0007669"/>
    <property type="project" value="UniProtKB-EC"/>
</dbReference>
<dbReference type="GO" id="GO:0000049">
    <property type="term" value="F:tRNA binding"/>
    <property type="evidence" value="ECO:0007669"/>
    <property type="project" value="TreeGrafter"/>
</dbReference>
<dbReference type="GO" id="GO:0006450">
    <property type="term" value="P:regulation of translational fidelity"/>
    <property type="evidence" value="ECO:0007669"/>
    <property type="project" value="TreeGrafter"/>
</dbReference>
<dbReference type="GO" id="GO:0002949">
    <property type="term" value="P:tRNA threonylcarbamoyladenosine modification"/>
    <property type="evidence" value="ECO:0007669"/>
    <property type="project" value="UniProtKB-UniRule"/>
</dbReference>
<dbReference type="FunFam" id="3.90.870.10:FF:000004">
    <property type="entry name" value="Threonylcarbamoyl-AMP synthase"/>
    <property type="match status" value="1"/>
</dbReference>
<dbReference type="Gene3D" id="3.90.870.10">
    <property type="entry name" value="DHBP synthase"/>
    <property type="match status" value="1"/>
</dbReference>
<dbReference type="HAMAP" id="MF_01852">
    <property type="entry name" value="TsaC"/>
    <property type="match status" value="1"/>
</dbReference>
<dbReference type="InterPro" id="IPR017945">
    <property type="entry name" value="DHBP_synth_RibB-like_a/b_dom"/>
</dbReference>
<dbReference type="InterPro" id="IPR006070">
    <property type="entry name" value="Sua5-like_dom"/>
</dbReference>
<dbReference type="InterPro" id="IPR023535">
    <property type="entry name" value="TC-AMP_synthase"/>
</dbReference>
<dbReference type="InterPro" id="IPR050156">
    <property type="entry name" value="TC-AMP_synthase_SUA5"/>
</dbReference>
<dbReference type="PANTHER" id="PTHR17490">
    <property type="entry name" value="SUA5"/>
    <property type="match status" value="1"/>
</dbReference>
<dbReference type="PANTHER" id="PTHR17490:SF18">
    <property type="entry name" value="THREONYLCARBAMOYL-AMP SYNTHASE"/>
    <property type="match status" value="1"/>
</dbReference>
<dbReference type="Pfam" id="PF01300">
    <property type="entry name" value="Sua5_yciO_yrdC"/>
    <property type="match status" value="1"/>
</dbReference>
<dbReference type="SUPFAM" id="SSF55821">
    <property type="entry name" value="YrdC/RibB"/>
    <property type="match status" value="1"/>
</dbReference>
<dbReference type="PROSITE" id="PS51163">
    <property type="entry name" value="YRDC"/>
    <property type="match status" value="1"/>
</dbReference>
<gene>
    <name evidence="1" type="primary">tsaC</name>
    <name type="synonym">rimN</name>
    <name type="ordered locus">ASA_4134</name>
</gene>
<reference key="1">
    <citation type="journal article" date="2008" name="BMC Genomics">
        <title>The genome of Aeromonas salmonicida subsp. salmonicida A449: insights into the evolution of a fish pathogen.</title>
        <authorList>
            <person name="Reith M.E."/>
            <person name="Singh R.K."/>
            <person name="Curtis B."/>
            <person name="Boyd J.M."/>
            <person name="Bouevitch A."/>
            <person name="Kimball J."/>
            <person name="Munholland J."/>
            <person name="Murphy C."/>
            <person name="Sarty D."/>
            <person name="Williams J."/>
            <person name="Nash J.H."/>
            <person name="Johnson S.C."/>
            <person name="Brown L.L."/>
        </authorList>
    </citation>
    <scope>NUCLEOTIDE SEQUENCE [LARGE SCALE GENOMIC DNA]</scope>
    <source>
        <strain>A449</strain>
    </source>
</reference>
<accession>A4ST51</accession>
<proteinExistence type="inferred from homology"/>
<feature type="chain" id="PRO_0000352896" description="Threonylcarbamoyl-AMP synthase">
    <location>
        <begin position="1"/>
        <end position="186"/>
    </location>
</feature>
<feature type="domain" description="YrdC-like" evidence="1">
    <location>
        <begin position="2"/>
        <end position="186"/>
    </location>
</feature>
<name>TSAC_AERS4</name>
<keyword id="KW-0067">ATP-binding</keyword>
<keyword id="KW-0963">Cytoplasm</keyword>
<keyword id="KW-0547">Nucleotide-binding</keyword>
<keyword id="KW-0548">Nucleotidyltransferase</keyword>
<keyword id="KW-0808">Transferase</keyword>
<keyword id="KW-0819">tRNA processing</keyword>
<sequence>MSTEFEQAVAALHGEGVIAYATEAVFGLGCDPDSELAVQRLLAIKQRPVEKGLILIAADLVQLQDYIDLSQLSGEQLARVEASWPGPFTWIMPARATTPTWLTGQFDTLAVRVTAHPQVQALCRAFGKPLVSTSANLTGEEPARRVTDIGELLASKLAYILPGEVGGQANPSEIKDARTGAVIRPS</sequence>
<protein>
    <recommendedName>
        <fullName evidence="1">Threonylcarbamoyl-AMP synthase</fullName>
        <shortName evidence="1">TC-AMP synthase</shortName>
        <ecNumber evidence="1">2.7.7.87</ecNumber>
    </recommendedName>
    <alternativeName>
        <fullName evidence="1">L-threonylcarbamoyladenylate synthase</fullName>
    </alternativeName>
    <alternativeName>
        <fullName evidence="1">t(6)A37 threonylcarbamoyladenosine biosynthesis protein TsaC</fullName>
    </alternativeName>
    <alternativeName>
        <fullName evidence="1">tRNA threonylcarbamoyladenosine biosynthesis protein TsaC</fullName>
    </alternativeName>
</protein>
<evidence type="ECO:0000255" key="1">
    <source>
        <dbReference type="HAMAP-Rule" id="MF_01852"/>
    </source>
</evidence>